<keyword id="KW-0028">Amino-acid biosynthesis</keyword>
<keyword id="KW-0057">Aromatic amino acid biosynthesis</keyword>
<keyword id="KW-0067">ATP-binding</keyword>
<keyword id="KW-0963">Cytoplasm</keyword>
<keyword id="KW-0418">Kinase</keyword>
<keyword id="KW-0460">Magnesium</keyword>
<keyword id="KW-0479">Metal-binding</keyword>
<keyword id="KW-0547">Nucleotide-binding</keyword>
<keyword id="KW-0808">Transferase</keyword>
<name>AROK_FRAT1</name>
<organism>
    <name type="scientific">Francisella tularensis subsp. tularensis (strain FSC 198)</name>
    <dbReference type="NCBI Taxonomy" id="393115"/>
    <lineage>
        <taxon>Bacteria</taxon>
        <taxon>Pseudomonadati</taxon>
        <taxon>Pseudomonadota</taxon>
        <taxon>Gammaproteobacteria</taxon>
        <taxon>Thiotrichales</taxon>
        <taxon>Francisellaceae</taxon>
        <taxon>Francisella</taxon>
    </lineage>
</organism>
<reference key="1">
    <citation type="journal article" date="2007" name="PLoS ONE">
        <title>Genome sequencing shows that European isolates of Francisella tularensis subspecies tularensis are almost identical to US laboratory strain Schu S4.</title>
        <authorList>
            <person name="Chaudhuri R.R."/>
            <person name="Ren C.-P."/>
            <person name="Desmond L."/>
            <person name="Vincent G.A."/>
            <person name="Silman N.J."/>
            <person name="Brehm J.K."/>
            <person name="Elmore M.J."/>
            <person name="Hudson M.J."/>
            <person name="Forsman M."/>
            <person name="Isherwood K.E."/>
            <person name="Gurycova D."/>
            <person name="Minton N.P."/>
            <person name="Titball R.W."/>
            <person name="Pallen M.J."/>
            <person name="Vipond R."/>
        </authorList>
    </citation>
    <scope>NUCLEOTIDE SEQUENCE [LARGE SCALE GENOMIC DNA]</scope>
    <source>
        <strain>FSC 198</strain>
    </source>
</reference>
<feature type="chain" id="PRO_1000022968" description="Shikimate kinase">
    <location>
        <begin position="1"/>
        <end position="176"/>
    </location>
</feature>
<feature type="binding site" evidence="1">
    <location>
        <begin position="14"/>
        <end position="19"/>
    </location>
    <ligand>
        <name>ATP</name>
        <dbReference type="ChEBI" id="CHEBI:30616"/>
    </ligand>
</feature>
<feature type="binding site" evidence="1">
    <location>
        <position position="18"/>
    </location>
    <ligand>
        <name>Mg(2+)</name>
        <dbReference type="ChEBI" id="CHEBI:18420"/>
    </ligand>
</feature>
<feature type="binding site" evidence="1">
    <location>
        <position position="36"/>
    </location>
    <ligand>
        <name>substrate</name>
    </ligand>
</feature>
<feature type="binding site" evidence="1">
    <location>
        <position position="60"/>
    </location>
    <ligand>
        <name>substrate</name>
    </ligand>
</feature>
<feature type="binding site" evidence="1">
    <location>
        <position position="83"/>
    </location>
    <ligand>
        <name>substrate</name>
    </ligand>
</feature>
<feature type="binding site" evidence="1">
    <location>
        <position position="121"/>
    </location>
    <ligand>
        <name>ATP</name>
        <dbReference type="ChEBI" id="CHEBI:30616"/>
    </ligand>
</feature>
<feature type="binding site" evidence="1">
    <location>
        <position position="140"/>
    </location>
    <ligand>
        <name>substrate</name>
    </ligand>
</feature>
<proteinExistence type="inferred from homology"/>
<comment type="function">
    <text evidence="1">Catalyzes the specific phosphorylation of the 3-hydroxyl group of shikimic acid using ATP as a cosubstrate.</text>
</comment>
<comment type="catalytic activity">
    <reaction evidence="1">
        <text>shikimate + ATP = 3-phosphoshikimate + ADP + H(+)</text>
        <dbReference type="Rhea" id="RHEA:13121"/>
        <dbReference type="ChEBI" id="CHEBI:15378"/>
        <dbReference type="ChEBI" id="CHEBI:30616"/>
        <dbReference type="ChEBI" id="CHEBI:36208"/>
        <dbReference type="ChEBI" id="CHEBI:145989"/>
        <dbReference type="ChEBI" id="CHEBI:456216"/>
        <dbReference type="EC" id="2.7.1.71"/>
    </reaction>
</comment>
<comment type="cofactor">
    <cofactor evidence="1">
        <name>Mg(2+)</name>
        <dbReference type="ChEBI" id="CHEBI:18420"/>
    </cofactor>
    <text evidence="1">Binds 1 Mg(2+) ion per subunit.</text>
</comment>
<comment type="pathway">
    <text evidence="1">Metabolic intermediate biosynthesis; chorismate biosynthesis; chorismate from D-erythrose 4-phosphate and phosphoenolpyruvate: step 5/7.</text>
</comment>
<comment type="subunit">
    <text evidence="1">Monomer.</text>
</comment>
<comment type="subcellular location">
    <subcellularLocation>
        <location evidence="1">Cytoplasm</location>
    </subcellularLocation>
</comment>
<comment type="similarity">
    <text evidence="1">Belongs to the shikimate kinase family.</text>
</comment>
<accession>Q14H72</accession>
<protein>
    <recommendedName>
        <fullName evidence="1">Shikimate kinase</fullName>
        <shortName evidence="1">SK</shortName>
        <ecNumber evidence="1">2.7.1.71</ecNumber>
    </recommendedName>
</protein>
<gene>
    <name evidence="1" type="primary">aroK</name>
    <name type="ordered locus">FTF1155c</name>
</gene>
<sequence length="176" mass="19737">MIRTKNIFLIGPVGAGKSTIGKQLAKQLKLEFIDSDDVIEKKCGVDINWIFDLEGEEGFRKREREVIAEILAEKQNIVLATGGGAILDPETRSLLSSRGKVVYLEATIEQQLERTSKDTKRPLLRVDDKRPVLEQLMAEREPLYRSIADVVVETNGATVKNIVNKISTFLVEETIL</sequence>
<dbReference type="EC" id="2.7.1.71" evidence="1"/>
<dbReference type="EMBL" id="AM286280">
    <property type="protein sequence ID" value="CAL09171.1"/>
    <property type="molecule type" value="Genomic_DNA"/>
</dbReference>
<dbReference type="RefSeq" id="WP_003018629.1">
    <property type="nucleotide sequence ID" value="NC_008245.1"/>
</dbReference>
<dbReference type="SMR" id="Q14H72"/>
<dbReference type="GeneID" id="75265130"/>
<dbReference type="KEGG" id="ftf:FTF1155c"/>
<dbReference type="HOGENOM" id="CLU_057607_2_2_6"/>
<dbReference type="UniPathway" id="UPA00053">
    <property type="reaction ID" value="UER00088"/>
</dbReference>
<dbReference type="GO" id="GO:0005829">
    <property type="term" value="C:cytosol"/>
    <property type="evidence" value="ECO:0007669"/>
    <property type="project" value="TreeGrafter"/>
</dbReference>
<dbReference type="GO" id="GO:0005524">
    <property type="term" value="F:ATP binding"/>
    <property type="evidence" value="ECO:0007669"/>
    <property type="project" value="UniProtKB-UniRule"/>
</dbReference>
<dbReference type="GO" id="GO:0016887">
    <property type="term" value="F:ATP hydrolysis activity"/>
    <property type="evidence" value="ECO:0007669"/>
    <property type="project" value="InterPro"/>
</dbReference>
<dbReference type="GO" id="GO:0000287">
    <property type="term" value="F:magnesium ion binding"/>
    <property type="evidence" value="ECO:0007669"/>
    <property type="project" value="UniProtKB-UniRule"/>
</dbReference>
<dbReference type="GO" id="GO:0004765">
    <property type="term" value="F:shikimate kinase activity"/>
    <property type="evidence" value="ECO:0007669"/>
    <property type="project" value="UniProtKB-UniRule"/>
</dbReference>
<dbReference type="GO" id="GO:0008652">
    <property type="term" value="P:amino acid biosynthetic process"/>
    <property type="evidence" value="ECO:0007669"/>
    <property type="project" value="UniProtKB-KW"/>
</dbReference>
<dbReference type="GO" id="GO:0009073">
    <property type="term" value="P:aromatic amino acid family biosynthetic process"/>
    <property type="evidence" value="ECO:0007669"/>
    <property type="project" value="UniProtKB-KW"/>
</dbReference>
<dbReference type="GO" id="GO:0009423">
    <property type="term" value="P:chorismate biosynthetic process"/>
    <property type="evidence" value="ECO:0007669"/>
    <property type="project" value="UniProtKB-UniRule"/>
</dbReference>
<dbReference type="CDD" id="cd00464">
    <property type="entry name" value="SK"/>
    <property type="match status" value="1"/>
</dbReference>
<dbReference type="Gene3D" id="3.40.50.300">
    <property type="entry name" value="P-loop containing nucleotide triphosphate hydrolases"/>
    <property type="match status" value="1"/>
</dbReference>
<dbReference type="HAMAP" id="MF_00109">
    <property type="entry name" value="Shikimate_kinase"/>
    <property type="match status" value="1"/>
</dbReference>
<dbReference type="InterPro" id="IPR003593">
    <property type="entry name" value="AAA+_ATPase"/>
</dbReference>
<dbReference type="InterPro" id="IPR027417">
    <property type="entry name" value="P-loop_NTPase"/>
</dbReference>
<dbReference type="InterPro" id="IPR031322">
    <property type="entry name" value="Shikimate/glucono_kinase"/>
</dbReference>
<dbReference type="InterPro" id="IPR000623">
    <property type="entry name" value="Shikimate_kinase/TSH1"/>
</dbReference>
<dbReference type="InterPro" id="IPR023000">
    <property type="entry name" value="Shikimate_kinase_CS"/>
</dbReference>
<dbReference type="NCBIfam" id="NF003456">
    <property type="entry name" value="PRK05057.1"/>
    <property type="match status" value="1"/>
</dbReference>
<dbReference type="PANTHER" id="PTHR21087">
    <property type="entry name" value="SHIKIMATE KINASE"/>
    <property type="match status" value="1"/>
</dbReference>
<dbReference type="PANTHER" id="PTHR21087:SF16">
    <property type="entry name" value="SHIKIMATE KINASE 1, CHLOROPLASTIC"/>
    <property type="match status" value="1"/>
</dbReference>
<dbReference type="Pfam" id="PF01202">
    <property type="entry name" value="SKI"/>
    <property type="match status" value="1"/>
</dbReference>
<dbReference type="PRINTS" id="PR01100">
    <property type="entry name" value="SHIKIMTKNASE"/>
</dbReference>
<dbReference type="SMART" id="SM00382">
    <property type="entry name" value="AAA"/>
    <property type="match status" value="1"/>
</dbReference>
<dbReference type="SUPFAM" id="SSF52540">
    <property type="entry name" value="P-loop containing nucleoside triphosphate hydrolases"/>
    <property type="match status" value="1"/>
</dbReference>
<dbReference type="PROSITE" id="PS01128">
    <property type="entry name" value="SHIKIMATE_KINASE"/>
    <property type="match status" value="1"/>
</dbReference>
<evidence type="ECO:0000255" key="1">
    <source>
        <dbReference type="HAMAP-Rule" id="MF_00109"/>
    </source>
</evidence>